<dbReference type="EC" id="2.1.1.195" evidence="1"/>
<dbReference type="EMBL" id="AP008231">
    <property type="protein sequence ID" value="BAD79511.1"/>
    <property type="molecule type" value="Genomic_DNA"/>
</dbReference>
<dbReference type="RefSeq" id="WP_011243633.1">
    <property type="nucleotide sequence ID" value="NZ_CP085785.1"/>
</dbReference>
<dbReference type="SMR" id="Q5N2F9"/>
<dbReference type="GeneID" id="72429003"/>
<dbReference type="KEGG" id="syc:syc1321_d"/>
<dbReference type="eggNOG" id="COG1903">
    <property type="taxonomic scope" value="Bacteria"/>
</dbReference>
<dbReference type="UniPathway" id="UPA00148">
    <property type="reaction ID" value="UER00227"/>
</dbReference>
<dbReference type="Proteomes" id="UP000001175">
    <property type="component" value="Chromosome"/>
</dbReference>
<dbReference type="GO" id="GO:0043780">
    <property type="term" value="F:cobalt-precorrin-5B C1-methyltransferase activity"/>
    <property type="evidence" value="ECO:0007669"/>
    <property type="project" value="RHEA"/>
</dbReference>
<dbReference type="GO" id="GO:0019251">
    <property type="term" value="P:anaerobic cobalamin biosynthetic process"/>
    <property type="evidence" value="ECO:0007669"/>
    <property type="project" value="UniProtKB-UniRule"/>
</dbReference>
<dbReference type="GO" id="GO:0032259">
    <property type="term" value="P:methylation"/>
    <property type="evidence" value="ECO:0007669"/>
    <property type="project" value="UniProtKB-KW"/>
</dbReference>
<dbReference type="Gene3D" id="3.30.2110.10">
    <property type="entry name" value="CbiD-like"/>
    <property type="match status" value="1"/>
</dbReference>
<dbReference type="HAMAP" id="MF_00787">
    <property type="entry name" value="CbiD"/>
    <property type="match status" value="1"/>
</dbReference>
<dbReference type="InterPro" id="IPR002748">
    <property type="entry name" value="CbiD"/>
</dbReference>
<dbReference type="InterPro" id="IPR036074">
    <property type="entry name" value="CbiD_sf"/>
</dbReference>
<dbReference type="NCBIfam" id="TIGR00312">
    <property type="entry name" value="cbiD"/>
    <property type="match status" value="1"/>
</dbReference>
<dbReference type="PANTHER" id="PTHR35863">
    <property type="entry name" value="COBALT-PRECORRIN-5B C(1)-METHYLTRANSFERASE"/>
    <property type="match status" value="1"/>
</dbReference>
<dbReference type="PANTHER" id="PTHR35863:SF1">
    <property type="entry name" value="COBALT-PRECORRIN-5B C(1)-METHYLTRANSFERASE"/>
    <property type="match status" value="1"/>
</dbReference>
<dbReference type="Pfam" id="PF01888">
    <property type="entry name" value="CbiD"/>
    <property type="match status" value="1"/>
</dbReference>
<dbReference type="PIRSF" id="PIRSF026782">
    <property type="entry name" value="CbiD"/>
    <property type="match status" value="1"/>
</dbReference>
<dbReference type="SUPFAM" id="SSF111342">
    <property type="entry name" value="CbiD-like"/>
    <property type="match status" value="1"/>
</dbReference>
<protein>
    <recommendedName>
        <fullName evidence="1">Cobalt-precorrin-5B C(1)-methyltransferase</fullName>
        <ecNumber evidence="1">2.1.1.195</ecNumber>
    </recommendedName>
    <alternativeName>
        <fullName evidence="1">Cobalt-precorrin-6A synthase</fullName>
    </alternativeName>
</protein>
<gene>
    <name evidence="1" type="primary">cbiD</name>
    <name type="ordered locus">syc1321_d</name>
</gene>
<name>CBID_SYNP6</name>
<sequence length="374" mass="40693">MARSGYTLPVFACAAAIAALQRLRQPAASIQSVDCHLIDPDQTVAIAIEQVAPLSPDRALAICRSDPGDNLDLTRGTPIWAEVQLSPRSPDQDSLAIEAGEGIGHSETGPAIYDYAQRLLRANLLPLLQTNEQLTVRLILPEGRRLAERTANAAFGVVEGLSLLGTHGVAEALSAPEQLQVFRDRLRQLSADPDLVIFCIGENGLDLSQKIGLPRDRQLKTANWLGPLLVEAGLLGIPRILLFGYHGKLLKLAGSIFHTHHHVADARREILAAYAIAAGASLEQVRSLLDFPTVDAATQYLDQTDPALASRLWPQIAEAIVDRSQAYIRRYSEQIPEIGVVLFGRDRQLLTASSQAQTWLTNRAIAQPLRYPSA</sequence>
<reference key="1">
    <citation type="journal article" date="2007" name="Photosyn. Res.">
        <title>Complete nucleotide sequence of the freshwater unicellular cyanobacterium Synechococcus elongatus PCC 6301 chromosome: gene content and organization.</title>
        <authorList>
            <person name="Sugita C."/>
            <person name="Ogata K."/>
            <person name="Shikata M."/>
            <person name="Jikuya H."/>
            <person name="Takano J."/>
            <person name="Furumichi M."/>
            <person name="Kanehisa M."/>
            <person name="Omata T."/>
            <person name="Sugiura M."/>
            <person name="Sugita M."/>
        </authorList>
    </citation>
    <scope>NUCLEOTIDE SEQUENCE [LARGE SCALE GENOMIC DNA]</scope>
    <source>
        <strain>ATCC 27144 / PCC 6301 / SAUG 1402/1</strain>
    </source>
</reference>
<keyword id="KW-0169">Cobalamin biosynthesis</keyword>
<keyword id="KW-0489">Methyltransferase</keyword>
<keyword id="KW-0949">S-adenosyl-L-methionine</keyword>
<keyword id="KW-0808">Transferase</keyword>
<proteinExistence type="inferred from homology"/>
<evidence type="ECO:0000255" key="1">
    <source>
        <dbReference type="HAMAP-Rule" id="MF_00787"/>
    </source>
</evidence>
<organism>
    <name type="scientific">Synechococcus sp. (strain ATCC 27144 / PCC 6301 / SAUG 1402/1)</name>
    <name type="common">Anacystis nidulans</name>
    <dbReference type="NCBI Taxonomy" id="269084"/>
    <lineage>
        <taxon>Bacteria</taxon>
        <taxon>Bacillati</taxon>
        <taxon>Cyanobacteriota</taxon>
        <taxon>Cyanophyceae</taxon>
        <taxon>Synechococcales</taxon>
        <taxon>Synechococcaceae</taxon>
        <taxon>Synechococcus</taxon>
    </lineage>
</organism>
<comment type="function">
    <text evidence="1">Catalyzes the methylation of C-1 in cobalt-precorrin-5B to form cobalt-precorrin-6A.</text>
</comment>
<comment type="catalytic activity">
    <reaction evidence="1">
        <text>Co-precorrin-5B + S-adenosyl-L-methionine = Co-precorrin-6A + S-adenosyl-L-homocysteine</text>
        <dbReference type="Rhea" id="RHEA:26285"/>
        <dbReference type="ChEBI" id="CHEBI:57856"/>
        <dbReference type="ChEBI" id="CHEBI:59789"/>
        <dbReference type="ChEBI" id="CHEBI:60063"/>
        <dbReference type="ChEBI" id="CHEBI:60064"/>
        <dbReference type="EC" id="2.1.1.195"/>
    </reaction>
</comment>
<comment type="pathway">
    <text evidence="1">Cofactor biosynthesis; adenosylcobalamin biosynthesis; cob(II)yrinate a,c-diamide from sirohydrochlorin (anaerobic route): step 6/10.</text>
</comment>
<comment type="similarity">
    <text evidence="1">Belongs to the CbiD family.</text>
</comment>
<feature type="chain" id="PRO_0000257779" description="Cobalt-precorrin-5B C(1)-methyltransferase">
    <location>
        <begin position="1"/>
        <end position="374"/>
    </location>
</feature>
<accession>Q5N2F9</accession>